<accession>Q12WA2</accession>
<feature type="chain" id="PRO_1000009371" description="Leucine--tRNA ligase">
    <location>
        <begin position="1"/>
        <end position="962"/>
    </location>
</feature>
<feature type="short sequence motif" description="'HIGH' region">
    <location>
        <begin position="41"/>
        <end position="51"/>
    </location>
</feature>
<feature type="short sequence motif" description="'KMSKS' region">
    <location>
        <begin position="631"/>
        <end position="635"/>
    </location>
</feature>
<feature type="binding site" evidence="1">
    <location>
        <position position="634"/>
    </location>
    <ligand>
        <name>ATP</name>
        <dbReference type="ChEBI" id="CHEBI:30616"/>
    </ligand>
</feature>
<organism>
    <name type="scientific">Methanococcoides burtonii (strain DSM 6242 / NBRC 107633 / OCM 468 / ACE-M)</name>
    <dbReference type="NCBI Taxonomy" id="259564"/>
    <lineage>
        <taxon>Archaea</taxon>
        <taxon>Methanobacteriati</taxon>
        <taxon>Methanobacteriota</taxon>
        <taxon>Stenosarchaea group</taxon>
        <taxon>Methanomicrobia</taxon>
        <taxon>Methanosarcinales</taxon>
        <taxon>Methanosarcinaceae</taxon>
        <taxon>Methanococcoides</taxon>
    </lineage>
</organism>
<comment type="catalytic activity">
    <reaction evidence="1">
        <text>tRNA(Leu) + L-leucine + ATP = L-leucyl-tRNA(Leu) + AMP + diphosphate</text>
        <dbReference type="Rhea" id="RHEA:11688"/>
        <dbReference type="Rhea" id="RHEA-COMP:9613"/>
        <dbReference type="Rhea" id="RHEA-COMP:9622"/>
        <dbReference type="ChEBI" id="CHEBI:30616"/>
        <dbReference type="ChEBI" id="CHEBI:33019"/>
        <dbReference type="ChEBI" id="CHEBI:57427"/>
        <dbReference type="ChEBI" id="CHEBI:78442"/>
        <dbReference type="ChEBI" id="CHEBI:78494"/>
        <dbReference type="ChEBI" id="CHEBI:456215"/>
        <dbReference type="EC" id="6.1.1.4"/>
    </reaction>
</comment>
<comment type="subcellular location">
    <subcellularLocation>
        <location evidence="1">Cytoplasm</location>
    </subcellularLocation>
</comment>
<comment type="similarity">
    <text evidence="1">Belongs to the class-I aminoacyl-tRNA synthetase family.</text>
</comment>
<keyword id="KW-0030">Aminoacyl-tRNA synthetase</keyword>
<keyword id="KW-0067">ATP-binding</keyword>
<keyword id="KW-0963">Cytoplasm</keyword>
<keyword id="KW-0436">Ligase</keyword>
<keyword id="KW-0547">Nucleotide-binding</keyword>
<keyword id="KW-0648">Protein biosynthesis</keyword>
<gene>
    <name evidence="1" type="primary">leuS</name>
    <name type="ordered locus">Mbur_1356</name>
</gene>
<evidence type="ECO:0000255" key="1">
    <source>
        <dbReference type="HAMAP-Rule" id="MF_00049"/>
    </source>
</evidence>
<sequence>MQQDYNSSNIEQKWQQKWNESKVFEAEADDRDKYFITIPYPYLNGNLHAGHTRTFTIGDVVARYKRMMGNNVLYPMGFHVTGTPIVGLAELIQNRDPETMKVYTEFHGIPVETLKGMDTPEKIVDYFSVEAERSMRSIGYSIDWRRKFTTTDPNYKKFIEWQFNLLYEKDLIVKGSHPVKWCPNDDNPVEDHDILHGEEATIIDYTLVKFKYDGMIIPCATLRPETVFGVTNLWINPDLEHVKIKVTFEGREEVWVVSKEAYRKLIFTDREVEFIEDVDASSLIGIKVTNPLNDAQVITLPASFVKGENGSGIVMSVPSHAPYDYLALRDLYDKDLREYGITEDLRELKFISLIKVKEFGEFPAIEAVEQFGVKDQDDPKAEEATKIVYRREFHGGVLKENTGKYSGMAVSKIKDVLTRDLIEMGIGEVFYEFSEPVVCRCGTPCVVNMVKGQWFLNYSNPEWKDKVYRCIENMDIIPEDLRVEFNNKVDWLKDKACARKKGLGTLLPFDNQWLIESLGDSTIYMSYYIIAKFIAMGIETEQLVPELFDHVLLKKCSLETAAERSGIDANIIEQISSDFEYWYPVDLRSSGKDLIPNHLLFFLFHHVAIFDEDKWPRAIAINGFVSLEGKKMSKSKGPLLTLNDAITNYGADISRMYILSSAEQMQDADWKNSGIETARKQIERFYNFSKDIIGSGIPTCNVENLKGIDKWMLSRLQQRILETNEALDTIRTRNALQNAYFLLFNDIRWYQKRGGNALLCEVLDVWIRLMAPFTPHICEEIWEAIGHTDNDLISLADYPQYDESLVDTQAEFTEELIGGTLSDVDEIIRVTKLTPKKAILYTSPEWKMETFKKALSMQKEGNLNPGILIKDLMRDPEMRSHGKEVPKFAQKVVSDITAMNEEKFDTLSNFDLDEKIALEENLEFFKNELGCSVEIYSADNAEYDPENKARFAYPLRPAIYLE</sequence>
<reference key="1">
    <citation type="journal article" date="2009" name="ISME J.">
        <title>The genome sequence of the psychrophilic archaeon, Methanococcoides burtonii: the role of genome evolution in cold adaptation.</title>
        <authorList>
            <person name="Allen M.A."/>
            <person name="Lauro F.M."/>
            <person name="Williams T.J."/>
            <person name="Burg D."/>
            <person name="Siddiqui K.S."/>
            <person name="De Francisci D."/>
            <person name="Chong K.W."/>
            <person name="Pilak O."/>
            <person name="Chew H.H."/>
            <person name="De Maere M.Z."/>
            <person name="Ting L."/>
            <person name="Katrib M."/>
            <person name="Ng C."/>
            <person name="Sowers K.R."/>
            <person name="Galperin M.Y."/>
            <person name="Anderson I.J."/>
            <person name="Ivanova N."/>
            <person name="Dalin E."/>
            <person name="Martinez M."/>
            <person name="Lapidus A."/>
            <person name="Hauser L."/>
            <person name="Land M."/>
            <person name="Thomas T."/>
            <person name="Cavicchioli R."/>
        </authorList>
    </citation>
    <scope>NUCLEOTIDE SEQUENCE [LARGE SCALE GENOMIC DNA]</scope>
    <source>
        <strain>DSM 6242 / NBRC 107633 / OCM 468 / ACE-M</strain>
    </source>
</reference>
<name>SYL_METBU</name>
<dbReference type="EC" id="6.1.1.4" evidence="1"/>
<dbReference type="EMBL" id="CP000300">
    <property type="protein sequence ID" value="ABE52274.1"/>
    <property type="molecule type" value="Genomic_DNA"/>
</dbReference>
<dbReference type="RefSeq" id="WP_011499419.1">
    <property type="nucleotide sequence ID" value="NC_007955.1"/>
</dbReference>
<dbReference type="SMR" id="Q12WA2"/>
<dbReference type="STRING" id="259564.Mbur_1356"/>
<dbReference type="GeneID" id="3997572"/>
<dbReference type="KEGG" id="mbu:Mbur_1356"/>
<dbReference type="HOGENOM" id="CLU_004174_0_0_2"/>
<dbReference type="OrthoDB" id="23906at2157"/>
<dbReference type="Proteomes" id="UP000001979">
    <property type="component" value="Chromosome"/>
</dbReference>
<dbReference type="GO" id="GO:0005737">
    <property type="term" value="C:cytoplasm"/>
    <property type="evidence" value="ECO:0007669"/>
    <property type="project" value="UniProtKB-SubCell"/>
</dbReference>
<dbReference type="GO" id="GO:0002161">
    <property type="term" value="F:aminoacyl-tRNA deacylase activity"/>
    <property type="evidence" value="ECO:0007669"/>
    <property type="project" value="InterPro"/>
</dbReference>
<dbReference type="GO" id="GO:0005524">
    <property type="term" value="F:ATP binding"/>
    <property type="evidence" value="ECO:0007669"/>
    <property type="project" value="UniProtKB-UniRule"/>
</dbReference>
<dbReference type="GO" id="GO:0004823">
    <property type="term" value="F:leucine-tRNA ligase activity"/>
    <property type="evidence" value="ECO:0007669"/>
    <property type="project" value="UniProtKB-UniRule"/>
</dbReference>
<dbReference type="GO" id="GO:0006429">
    <property type="term" value="P:leucyl-tRNA aminoacylation"/>
    <property type="evidence" value="ECO:0007669"/>
    <property type="project" value="UniProtKB-UniRule"/>
</dbReference>
<dbReference type="CDD" id="cd07959">
    <property type="entry name" value="Anticodon_Ia_Leu_AEc"/>
    <property type="match status" value="1"/>
</dbReference>
<dbReference type="FunFam" id="1.10.730.10:FF:000051">
    <property type="entry name" value="Leucine--tRNA ligase"/>
    <property type="match status" value="1"/>
</dbReference>
<dbReference type="FunFam" id="3.90.740.10:FF:000024">
    <property type="entry name" value="Leucine--tRNA ligase"/>
    <property type="match status" value="1"/>
</dbReference>
<dbReference type="Gene3D" id="3.30.2320.20">
    <property type="entry name" value="Class I aminoacyl-tRNA synthetases (RS)"/>
    <property type="match status" value="1"/>
</dbReference>
<dbReference type="Gene3D" id="3.40.50.620">
    <property type="entry name" value="HUPs"/>
    <property type="match status" value="1"/>
</dbReference>
<dbReference type="Gene3D" id="1.10.730.10">
    <property type="entry name" value="Isoleucyl-tRNA Synthetase, Domain 1"/>
    <property type="match status" value="1"/>
</dbReference>
<dbReference type="Gene3D" id="1.10.10.720">
    <property type="entry name" value="leucyl-tRNA synthetase"/>
    <property type="match status" value="1"/>
</dbReference>
<dbReference type="Gene3D" id="3.90.740.10">
    <property type="entry name" value="Valyl/Leucyl/Isoleucyl-tRNA synthetase, editing domain"/>
    <property type="match status" value="1"/>
</dbReference>
<dbReference type="HAMAP" id="MF_00049_A">
    <property type="entry name" value="Leu_tRNA_synth_A"/>
    <property type="match status" value="1"/>
</dbReference>
<dbReference type="InterPro" id="IPR001412">
    <property type="entry name" value="aa-tRNA-synth_I_CS"/>
</dbReference>
<dbReference type="InterPro" id="IPR002300">
    <property type="entry name" value="aa-tRNA-synth_Ia"/>
</dbReference>
<dbReference type="InterPro" id="IPR020791">
    <property type="entry name" value="Leu-tRNA-lgase_arc"/>
</dbReference>
<dbReference type="InterPro" id="IPR004493">
    <property type="entry name" value="Leu-tRNA-synth_Ia_arc/euk"/>
</dbReference>
<dbReference type="InterPro" id="IPR013155">
    <property type="entry name" value="M/V/L/I-tRNA-synth_anticd-bd"/>
</dbReference>
<dbReference type="InterPro" id="IPR014729">
    <property type="entry name" value="Rossmann-like_a/b/a_fold"/>
</dbReference>
<dbReference type="InterPro" id="IPR009080">
    <property type="entry name" value="tRNAsynth_Ia_anticodon-bd"/>
</dbReference>
<dbReference type="InterPro" id="IPR009008">
    <property type="entry name" value="Val/Leu/Ile-tRNA-synth_edit"/>
</dbReference>
<dbReference type="NCBIfam" id="TIGR00395">
    <property type="entry name" value="leuS_arch"/>
    <property type="match status" value="1"/>
</dbReference>
<dbReference type="NCBIfam" id="NF008957">
    <property type="entry name" value="PRK12300.1"/>
    <property type="match status" value="1"/>
</dbReference>
<dbReference type="PANTHER" id="PTHR45794:SF1">
    <property type="entry name" value="LEUCINE--TRNA LIGASE, CYTOPLASMIC"/>
    <property type="match status" value="1"/>
</dbReference>
<dbReference type="PANTHER" id="PTHR45794">
    <property type="entry name" value="LEUCYL-TRNA SYNTHETASE"/>
    <property type="match status" value="1"/>
</dbReference>
<dbReference type="Pfam" id="PF08264">
    <property type="entry name" value="Anticodon_1"/>
    <property type="match status" value="1"/>
</dbReference>
<dbReference type="Pfam" id="PF00133">
    <property type="entry name" value="tRNA-synt_1"/>
    <property type="match status" value="1"/>
</dbReference>
<dbReference type="SUPFAM" id="SSF47323">
    <property type="entry name" value="Anticodon-binding domain of a subclass of class I aminoacyl-tRNA synthetases"/>
    <property type="match status" value="1"/>
</dbReference>
<dbReference type="SUPFAM" id="SSF52374">
    <property type="entry name" value="Nucleotidylyl transferase"/>
    <property type="match status" value="1"/>
</dbReference>
<dbReference type="SUPFAM" id="SSF50677">
    <property type="entry name" value="ValRS/IleRS/LeuRS editing domain"/>
    <property type="match status" value="1"/>
</dbReference>
<dbReference type="PROSITE" id="PS00178">
    <property type="entry name" value="AA_TRNA_LIGASE_I"/>
    <property type="match status" value="1"/>
</dbReference>
<protein>
    <recommendedName>
        <fullName evidence="1">Leucine--tRNA ligase</fullName>
        <ecNumber evidence="1">6.1.1.4</ecNumber>
    </recommendedName>
    <alternativeName>
        <fullName evidence="1">Leucyl-tRNA synthetase</fullName>
        <shortName evidence="1">LeuRS</shortName>
    </alternativeName>
</protein>
<proteinExistence type="inferred from homology"/>